<accession>Q96J88</accession>
<accession>Q8IVC7</accession>
<accession>Q8NDQ7</accession>
<protein>
    <recommendedName>
        <fullName>Epithelial-stromal interaction protein 1</fullName>
    </recommendedName>
</protein>
<comment type="function">
    <text evidence="1">Plays a role in M1 macrophage polarization and is required for the proper regulation of gene expression during M1 versus M2 macrophage differentiation (By similarity). Might play a role in RELA/p65 and STAT1 phosphorylation and nuclear localization upon activation of macrophages (By similarity).</text>
</comment>
<comment type="interaction">
    <interactant intactId="EBI-25885343">
        <id>Q96J88-3</id>
    </interactant>
    <interactant intactId="EBI-399080">
        <id>Q92993</id>
        <label>KAT5</label>
    </interactant>
    <organismsDiffer>false</organismsDiffer>
    <experiments>3</experiments>
</comment>
<comment type="interaction">
    <interactant intactId="EBI-25885343">
        <id>Q96J88-3</id>
    </interactant>
    <interactant intactId="EBI-11742507">
        <id>Q8TAP4-4</id>
        <label>LMO3</label>
    </interactant>
    <organismsDiffer>false</organismsDiffer>
    <experiments>3</experiments>
</comment>
<comment type="interaction">
    <interactant intactId="EBI-25885343">
        <id>Q96J88-3</id>
    </interactant>
    <interactant intactId="EBI-1383528">
        <id>P17252</id>
        <label>PRKCA</label>
    </interactant>
    <organismsDiffer>false</organismsDiffer>
    <experiments>3</experiments>
</comment>
<comment type="interaction">
    <interactant intactId="EBI-25885343">
        <id>Q96J88-3</id>
    </interactant>
    <interactant intactId="EBI-9090795">
        <id>Q15047-2</id>
        <label>SETDB1</label>
    </interactant>
    <organismsDiffer>false</organismsDiffer>
    <experiments>3</experiments>
</comment>
<comment type="interaction">
    <interactant intactId="EBI-25885343">
        <id>Q96J88-3</id>
    </interactant>
    <interactant intactId="EBI-355164">
        <id>P55072</id>
        <label>VCP</label>
    </interactant>
    <organismsDiffer>false</organismsDiffer>
    <experiments>3</experiments>
</comment>
<comment type="interaction">
    <interactant intactId="EBI-25885343">
        <id>Q96J88-3</id>
    </interactant>
    <interactant intactId="EBI-359832">
        <id>P61981</id>
        <label>YWHAG</label>
    </interactant>
    <organismsDiffer>false</organismsDiffer>
    <experiments>3</experiments>
</comment>
<comment type="alternative products">
    <event type="alternative splicing"/>
    <isoform>
        <id>Q96J88-1</id>
        <name>1</name>
        <sequence type="displayed"/>
    </isoform>
    <isoform>
        <id>Q96J88-2</id>
        <name>2</name>
        <sequence type="described" ref="VSP_030201"/>
    </isoform>
    <isoform>
        <id>Q96J88-3</id>
        <name>3</name>
        <sequence type="described" ref="VSP_030202"/>
    </isoform>
</comment>
<comment type="tissue specificity">
    <text evidence="4 5">Highly expressed in placenta, small intestine, spleen, kidney, thymus, liver, salivary gland and testes. Weakly expressed in breast, skeletal muscle and colon. Highly expressed in breast cancer upon interaction between tumor cells and stromal cells in vitro. Expressed in blood mononuclear cells from patients with systemic lupus erythematosus (SLE).</text>
</comment>
<comment type="induction">
    <text evidence="4">Up-regulated in breast carcinomas.</text>
</comment>
<comment type="sequence caution" evidence="9">
    <conflict type="miscellaneous discrepancy">
        <sequence resource="EMBL-CDS" id="CAD38599"/>
    </conflict>
    <text>Intron retention. Authors have ignored retained intron when translating.</text>
</comment>
<proteinExistence type="evidence at protein level"/>
<name>ESIP1_HUMAN</name>
<reference key="1">
    <citation type="journal article" date="2002" name="Genomics">
        <title>Identification of EPSTI1, a novel gene induced by epithelial-stromal interaction in human breast cancer.</title>
        <authorList>
            <person name="Nielsen H.L."/>
            <person name="Ronnov-Jessen L."/>
            <person name="Villadsen R."/>
            <person name="Petersen O.W."/>
        </authorList>
    </citation>
    <scope>NUCLEOTIDE SEQUENCE [MRNA] (ISOFORM 2)</scope>
    <scope>INDUCTION</scope>
    <scope>TISSUE SPECIFICITY</scope>
    <source>
        <tissue>Mammary gland</tissue>
    </source>
</reference>
<reference key="2">
    <citation type="journal article" date="2004" name="Nat. Genet.">
        <title>Complete sequencing and characterization of 21,243 full-length human cDNAs.</title>
        <authorList>
            <person name="Ota T."/>
            <person name="Suzuki Y."/>
            <person name="Nishikawa T."/>
            <person name="Otsuki T."/>
            <person name="Sugiyama T."/>
            <person name="Irie R."/>
            <person name="Wakamatsu A."/>
            <person name="Hayashi K."/>
            <person name="Sato H."/>
            <person name="Nagai K."/>
            <person name="Kimura K."/>
            <person name="Makita H."/>
            <person name="Sekine M."/>
            <person name="Obayashi M."/>
            <person name="Nishi T."/>
            <person name="Shibahara T."/>
            <person name="Tanaka T."/>
            <person name="Ishii S."/>
            <person name="Yamamoto J."/>
            <person name="Saito K."/>
            <person name="Kawai Y."/>
            <person name="Isono Y."/>
            <person name="Nakamura Y."/>
            <person name="Nagahari K."/>
            <person name="Murakami K."/>
            <person name="Yasuda T."/>
            <person name="Iwayanagi T."/>
            <person name="Wagatsuma M."/>
            <person name="Shiratori A."/>
            <person name="Sudo H."/>
            <person name="Hosoiri T."/>
            <person name="Kaku Y."/>
            <person name="Kodaira H."/>
            <person name="Kondo H."/>
            <person name="Sugawara M."/>
            <person name="Takahashi M."/>
            <person name="Kanda K."/>
            <person name="Yokoi T."/>
            <person name="Furuya T."/>
            <person name="Kikkawa E."/>
            <person name="Omura Y."/>
            <person name="Abe K."/>
            <person name="Kamihara K."/>
            <person name="Katsuta N."/>
            <person name="Sato K."/>
            <person name="Tanikawa M."/>
            <person name="Yamazaki M."/>
            <person name="Ninomiya K."/>
            <person name="Ishibashi T."/>
            <person name="Yamashita H."/>
            <person name="Murakawa K."/>
            <person name="Fujimori K."/>
            <person name="Tanai H."/>
            <person name="Kimata M."/>
            <person name="Watanabe M."/>
            <person name="Hiraoka S."/>
            <person name="Chiba Y."/>
            <person name="Ishida S."/>
            <person name="Ono Y."/>
            <person name="Takiguchi S."/>
            <person name="Watanabe S."/>
            <person name="Yosida M."/>
            <person name="Hotuta T."/>
            <person name="Kusano J."/>
            <person name="Kanehori K."/>
            <person name="Takahashi-Fujii A."/>
            <person name="Hara H."/>
            <person name="Tanase T.-O."/>
            <person name="Nomura Y."/>
            <person name="Togiya S."/>
            <person name="Komai F."/>
            <person name="Hara R."/>
            <person name="Takeuchi K."/>
            <person name="Arita M."/>
            <person name="Imose N."/>
            <person name="Musashino K."/>
            <person name="Yuuki H."/>
            <person name="Oshima A."/>
            <person name="Sasaki N."/>
            <person name="Aotsuka S."/>
            <person name="Yoshikawa Y."/>
            <person name="Matsunawa H."/>
            <person name="Ichihara T."/>
            <person name="Shiohata N."/>
            <person name="Sano S."/>
            <person name="Moriya S."/>
            <person name="Momiyama H."/>
            <person name="Satoh N."/>
            <person name="Takami S."/>
            <person name="Terashima Y."/>
            <person name="Suzuki O."/>
            <person name="Nakagawa S."/>
            <person name="Senoh A."/>
            <person name="Mizoguchi H."/>
            <person name="Goto Y."/>
            <person name="Shimizu F."/>
            <person name="Wakebe H."/>
            <person name="Hishigaki H."/>
            <person name="Watanabe T."/>
            <person name="Sugiyama A."/>
            <person name="Takemoto M."/>
            <person name="Kawakami B."/>
            <person name="Yamazaki M."/>
            <person name="Watanabe K."/>
            <person name="Kumagai A."/>
            <person name="Itakura S."/>
            <person name="Fukuzumi Y."/>
            <person name="Fujimori Y."/>
            <person name="Komiyama M."/>
            <person name="Tashiro H."/>
            <person name="Tanigami A."/>
            <person name="Fujiwara T."/>
            <person name="Ono T."/>
            <person name="Yamada K."/>
            <person name="Fujii Y."/>
            <person name="Ozaki K."/>
            <person name="Hirao M."/>
            <person name="Ohmori Y."/>
            <person name="Kawabata A."/>
            <person name="Hikiji T."/>
            <person name="Kobatake N."/>
            <person name="Inagaki H."/>
            <person name="Ikema Y."/>
            <person name="Okamoto S."/>
            <person name="Okitani R."/>
            <person name="Kawakami T."/>
            <person name="Noguchi S."/>
            <person name="Itoh T."/>
            <person name="Shigeta K."/>
            <person name="Senba T."/>
            <person name="Matsumura K."/>
            <person name="Nakajima Y."/>
            <person name="Mizuno T."/>
            <person name="Morinaga M."/>
            <person name="Sasaki M."/>
            <person name="Togashi T."/>
            <person name="Oyama M."/>
            <person name="Hata H."/>
            <person name="Watanabe M."/>
            <person name="Komatsu T."/>
            <person name="Mizushima-Sugano J."/>
            <person name="Satoh T."/>
            <person name="Shirai Y."/>
            <person name="Takahashi Y."/>
            <person name="Nakagawa K."/>
            <person name="Okumura K."/>
            <person name="Nagase T."/>
            <person name="Nomura N."/>
            <person name="Kikuchi H."/>
            <person name="Masuho Y."/>
            <person name="Yamashita R."/>
            <person name="Nakai K."/>
            <person name="Yada T."/>
            <person name="Nakamura Y."/>
            <person name="Ohara O."/>
            <person name="Isogai T."/>
            <person name="Sugano S."/>
        </authorList>
    </citation>
    <scope>NUCLEOTIDE SEQUENCE [LARGE SCALE MRNA] (ISOFORM 2)</scope>
    <source>
        <tissue>Testis</tissue>
    </source>
</reference>
<reference key="3">
    <citation type="journal article" date="2007" name="BMC Genomics">
        <title>The full-ORF clone resource of the German cDNA consortium.</title>
        <authorList>
            <person name="Bechtel S."/>
            <person name="Rosenfelder H."/>
            <person name="Duda A."/>
            <person name="Schmidt C.P."/>
            <person name="Ernst U."/>
            <person name="Wellenreuther R."/>
            <person name="Mehrle A."/>
            <person name="Schuster C."/>
            <person name="Bahr A."/>
            <person name="Bloecker H."/>
            <person name="Heubner D."/>
            <person name="Hoerlein A."/>
            <person name="Michel G."/>
            <person name="Wedler H."/>
            <person name="Koehrer K."/>
            <person name="Ottenwaelder B."/>
            <person name="Poustka A."/>
            <person name="Wiemann S."/>
            <person name="Schupp I."/>
        </authorList>
    </citation>
    <scope>NUCLEOTIDE SEQUENCE [LARGE SCALE MRNA] (ISOFORM 1)</scope>
    <source>
        <tissue>Lymph node</tissue>
    </source>
</reference>
<reference key="4">
    <citation type="journal article" date="2004" name="Nature">
        <title>The DNA sequence and analysis of human chromosome 13.</title>
        <authorList>
            <person name="Dunham A."/>
            <person name="Matthews L.H."/>
            <person name="Burton J."/>
            <person name="Ashurst J.L."/>
            <person name="Howe K.L."/>
            <person name="Ashcroft K.J."/>
            <person name="Beare D.M."/>
            <person name="Burford D.C."/>
            <person name="Hunt S.E."/>
            <person name="Griffiths-Jones S."/>
            <person name="Jones M.C."/>
            <person name="Keenan S.J."/>
            <person name="Oliver K."/>
            <person name="Scott C.E."/>
            <person name="Ainscough R."/>
            <person name="Almeida J.P."/>
            <person name="Ambrose K.D."/>
            <person name="Andrews D.T."/>
            <person name="Ashwell R.I.S."/>
            <person name="Babbage A.K."/>
            <person name="Bagguley C.L."/>
            <person name="Bailey J."/>
            <person name="Bannerjee R."/>
            <person name="Barlow K.F."/>
            <person name="Bates K."/>
            <person name="Beasley H."/>
            <person name="Bird C.P."/>
            <person name="Bray-Allen S."/>
            <person name="Brown A.J."/>
            <person name="Brown J.Y."/>
            <person name="Burrill W."/>
            <person name="Carder C."/>
            <person name="Carter N.P."/>
            <person name="Chapman J.C."/>
            <person name="Clamp M.E."/>
            <person name="Clark S.Y."/>
            <person name="Clarke G."/>
            <person name="Clee C.M."/>
            <person name="Clegg S.C."/>
            <person name="Cobley V."/>
            <person name="Collins J.E."/>
            <person name="Corby N."/>
            <person name="Coville G.J."/>
            <person name="Deloukas P."/>
            <person name="Dhami P."/>
            <person name="Dunham I."/>
            <person name="Dunn M."/>
            <person name="Earthrowl M.E."/>
            <person name="Ellington A.G."/>
            <person name="Faulkner L."/>
            <person name="Frankish A.G."/>
            <person name="Frankland J."/>
            <person name="French L."/>
            <person name="Garner P."/>
            <person name="Garnett J."/>
            <person name="Gilbert J.G.R."/>
            <person name="Gilson C.J."/>
            <person name="Ghori J."/>
            <person name="Grafham D.V."/>
            <person name="Gribble S.M."/>
            <person name="Griffiths C."/>
            <person name="Hall R.E."/>
            <person name="Hammond S."/>
            <person name="Harley J.L."/>
            <person name="Hart E.A."/>
            <person name="Heath P.D."/>
            <person name="Howden P.J."/>
            <person name="Huckle E.J."/>
            <person name="Hunt P.J."/>
            <person name="Hunt A.R."/>
            <person name="Johnson C."/>
            <person name="Johnson D."/>
            <person name="Kay M."/>
            <person name="Kimberley A.M."/>
            <person name="King A."/>
            <person name="Laird G.K."/>
            <person name="Langford C.J."/>
            <person name="Lawlor S."/>
            <person name="Leongamornlert D.A."/>
            <person name="Lloyd D.M."/>
            <person name="Lloyd C."/>
            <person name="Loveland J.E."/>
            <person name="Lovell J."/>
            <person name="Martin S."/>
            <person name="Mashreghi-Mohammadi M."/>
            <person name="McLaren S.J."/>
            <person name="McMurray A."/>
            <person name="Milne S."/>
            <person name="Moore M.J.F."/>
            <person name="Nickerson T."/>
            <person name="Palmer S.A."/>
            <person name="Pearce A.V."/>
            <person name="Peck A.I."/>
            <person name="Pelan S."/>
            <person name="Phillimore B."/>
            <person name="Porter K.M."/>
            <person name="Rice C.M."/>
            <person name="Searle S."/>
            <person name="Sehra H.K."/>
            <person name="Shownkeen R."/>
            <person name="Skuce C.D."/>
            <person name="Smith M."/>
            <person name="Steward C.A."/>
            <person name="Sycamore N."/>
            <person name="Tester J."/>
            <person name="Thomas D.W."/>
            <person name="Tracey A."/>
            <person name="Tromans A."/>
            <person name="Tubby B."/>
            <person name="Wall M."/>
            <person name="Wallis J.M."/>
            <person name="West A.P."/>
            <person name="Whitehead S.L."/>
            <person name="Willey D.L."/>
            <person name="Wilming L."/>
            <person name="Wray P.W."/>
            <person name="Wright M.W."/>
            <person name="Young L."/>
            <person name="Coulson A."/>
            <person name="Durbin R.M."/>
            <person name="Hubbard T."/>
            <person name="Sulston J.E."/>
            <person name="Beck S."/>
            <person name="Bentley D.R."/>
            <person name="Rogers J."/>
            <person name="Ross M.T."/>
        </authorList>
    </citation>
    <scope>NUCLEOTIDE SEQUENCE [LARGE SCALE GENOMIC DNA]</scope>
</reference>
<reference key="5">
    <citation type="submission" date="2005-07" db="EMBL/GenBank/DDBJ databases">
        <authorList>
            <person name="Mural R.J."/>
            <person name="Istrail S."/>
            <person name="Sutton G.G."/>
            <person name="Florea L."/>
            <person name="Halpern A.L."/>
            <person name="Mobarry C.M."/>
            <person name="Lippert R."/>
            <person name="Walenz B."/>
            <person name="Shatkay H."/>
            <person name="Dew I."/>
            <person name="Miller J.R."/>
            <person name="Flanigan M.J."/>
            <person name="Edwards N.J."/>
            <person name="Bolanos R."/>
            <person name="Fasulo D."/>
            <person name="Halldorsson B.V."/>
            <person name="Hannenhalli S."/>
            <person name="Turner R."/>
            <person name="Yooseph S."/>
            <person name="Lu F."/>
            <person name="Nusskern D.R."/>
            <person name="Shue B.C."/>
            <person name="Zheng X.H."/>
            <person name="Zhong F."/>
            <person name="Delcher A.L."/>
            <person name="Huson D.H."/>
            <person name="Kravitz S.A."/>
            <person name="Mouchard L."/>
            <person name="Reinert K."/>
            <person name="Remington K.A."/>
            <person name="Clark A.G."/>
            <person name="Waterman M.S."/>
            <person name="Eichler E.E."/>
            <person name="Adams M.D."/>
            <person name="Hunkapiller M.W."/>
            <person name="Myers E.W."/>
            <person name="Venter J.C."/>
        </authorList>
    </citation>
    <scope>NUCLEOTIDE SEQUENCE [LARGE SCALE GENOMIC DNA]</scope>
</reference>
<reference key="6">
    <citation type="journal article" date="2004" name="Genome Res.">
        <title>The status, quality, and expansion of the NIH full-length cDNA project: the Mammalian Gene Collection (MGC).</title>
        <authorList>
            <consortium name="The MGC Project Team"/>
        </authorList>
    </citation>
    <scope>NUCLEOTIDE SEQUENCE [LARGE SCALE MRNA] (ISOFORM 3)</scope>
    <source>
        <tissue>Colon</tissue>
    </source>
</reference>
<reference key="7">
    <citation type="journal article" date="2005" name="DNA Res.">
        <title>Isolation and expression profiling of genes upregulated in the peripheral blood cells of systemic lupus erythematosus patients.</title>
        <authorList>
            <person name="Ishii T."/>
            <person name="Onda H."/>
            <person name="Tanigawa A."/>
            <person name="Ohshima S."/>
            <person name="Fujiwara H."/>
            <person name="Mima T."/>
            <person name="Katada Y."/>
            <person name="Deguchi H."/>
            <person name="Suemura M."/>
            <person name="Miyake T."/>
            <person name="Miyatake K."/>
            <person name="Kawase I."/>
            <person name="Zhao H."/>
            <person name="Tomiyama Y."/>
            <person name="Saeki Y."/>
            <person name="Nojima H."/>
        </authorList>
    </citation>
    <scope>TISSUE SPECIFICITY</scope>
</reference>
<gene>
    <name type="primary">EPSTI1</name>
</gene>
<evidence type="ECO:0000250" key="1">
    <source>
        <dbReference type="UniProtKB" id="Q8VDI1"/>
    </source>
</evidence>
<evidence type="ECO:0000255" key="2"/>
<evidence type="ECO:0000256" key="3">
    <source>
        <dbReference type="SAM" id="MobiDB-lite"/>
    </source>
</evidence>
<evidence type="ECO:0000269" key="4">
    <source>
    </source>
</evidence>
<evidence type="ECO:0000269" key="5">
    <source>
    </source>
</evidence>
<evidence type="ECO:0000303" key="6">
    <source>
    </source>
</evidence>
<evidence type="ECO:0000303" key="7">
    <source>
    </source>
</evidence>
<evidence type="ECO:0000303" key="8">
    <source>
    </source>
</evidence>
<evidence type="ECO:0000305" key="9"/>
<sequence>MNTRNRVVNSGLGASPASRPTRDPQDPSGRQGELSPVEDQREGLEAAPKGPSRESVVHAGQRRTSAYTLIAPNINRRNEIQRIAEQELANLEKWKEQNRAKPVHLVPRRLGGSQSETEVRQKQQLQLMQSKYKQKLKREESVRIKKEAEEAELQKMKAIQREKSNKLEEKKRLQENLRREAFREHQQYKTAEFLSKLNTESPDRSACQSAVCGPQSSTWKLPILPRDHSWARSWAYRDSLKAEENRKLQKMKDEQHQKSELLELKRQQQEQERAKIHQTEHRRVNNAFLDRLQGKSQPGGLEQSGGCWNMNSGNSWGI</sequence>
<keyword id="KW-0025">Alternative splicing</keyword>
<keyword id="KW-0175">Coiled coil</keyword>
<keyword id="KW-1267">Proteomics identification</keyword>
<keyword id="KW-1185">Reference proteome</keyword>
<organism>
    <name type="scientific">Homo sapiens</name>
    <name type="common">Human</name>
    <dbReference type="NCBI Taxonomy" id="9606"/>
    <lineage>
        <taxon>Eukaryota</taxon>
        <taxon>Metazoa</taxon>
        <taxon>Chordata</taxon>
        <taxon>Craniata</taxon>
        <taxon>Vertebrata</taxon>
        <taxon>Euteleostomi</taxon>
        <taxon>Mammalia</taxon>
        <taxon>Eutheria</taxon>
        <taxon>Euarchontoglires</taxon>
        <taxon>Primates</taxon>
        <taxon>Haplorrhini</taxon>
        <taxon>Catarrhini</taxon>
        <taxon>Hominidae</taxon>
        <taxon>Homo</taxon>
    </lineage>
</organism>
<feature type="chain" id="PRO_0000314034" description="Epithelial-stromal interaction protein 1">
    <location>
        <begin position="1"/>
        <end position="318"/>
    </location>
</feature>
<feature type="region of interest" description="Disordered" evidence="3">
    <location>
        <begin position="1"/>
        <end position="60"/>
    </location>
</feature>
<feature type="coiled-coil region" evidence="2">
    <location>
        <begin position="73"/>
        <end position="188"/>
    </location>
</feature>
<feature type="coiled-coil region" evidence="2">
    <location>
        <begin position="240"/>
        <end position="280"/>
    </location>
</feature>
<feature type="splice variant" id="VSP_030201" description="In isoform 2." evidence="6 7">
    <location>
        <begin position="219"/>
        <end position="229"/>
    </location>
</feature>
<feature type="splice variant" id="VSP_030202" description="In isoform 3." evidence="8">
    <original>I</original>
    <variation>SLLVFSRHLRVYEKILTPIWPSSTDLEKPHEMLFLNVILFSLTVFTLISTAHTLDRAVRSDWLLLVLIYACLEELIPELIFNLYCQGNATLFF</variation>
    <location>
        <position position="318"/>
    </location>
</feature>
<feature type="sequence conflict" description="In Ref. 3; CAD38599." evidence="9" ref="3">
    <location>
        <position position="83"/>
    </location>
</feature>
<feature type="sequence variant" id="VAR_082880" description="In dbSNP:rs11557739." evidence="9">
    <original>P</original>
    <variation>S</variation>
    <location sequence="Q96J88-3">
        <position position="338"/>
    </location>
</feature>
<feature type="sequence variant" id="VAR_082881" description="In dbSNP:rs1044856." evidence="9">
    <original>N</original>
    <variation>K</variation>
    <location sequence="Q96J88-3">
        <position position="399"/>
    </location>
</feature>
<dbReference type="EMBL" id="AF396928">
    <property type="protein sequence ID" value="AAK73753.1"/>
    <property type="molecule type" value="mRNA"/>
</dbReference>
<dbReference type="EMBL" id="AK292461">
    <property type="protein sequence ID" value="BAF85150.1"/>
    <property type="molecule type" value="mRNA"/>
</dbReference>
<dbReference type="EMBL" id="AL831953">
    <property type="protein sequence ID" value="CAD38599.2"/>
    <property type="status" value="ALT_SEQ"/>
    <property type="molecule type" value="mRNA"/>
</dbReference>
<dbReference type="EMBL" id="AL137878">
    <property type="status" value="NOT_ANNOTATED_CDS"/>
    <property type="molecule type" value="Genomic_DNA"/>
</dbReference>
<dbReference type="EMBL" id="AL445217">
    <property type="status" value="NOT_ANNOTATED_CDS"/>
    <property type="molecule type" value="Genomic_DNA"/>
</dbReference>
<dbReference type="EMBL" id="CH471075">
    <property type="protein sequence ID" value="EAX08685.1"/>
    <property type="molecule type" value="Genomic_DNA"/>
</dbReference>
<dbReference type="EMBL" id="CH471075">
    <property type="protein sequence ID" value="EAX08686.1"/>
    <property type="molecule type" value="Genomic_DNA"/>
</dbReference>
<dbReference type="EMBL" id="BC023660">
    <property type="protein sequence ID" value="AAH23660.1"/>
    <property type="molecule type" value="mRNA"/>
</dbReference>
<dbReference type="CCDS" id="CCDS31964.1">
    <molecule id="Q96J88-3"/>
</dbReference>
<dbReference type="CCDS" id="CCDS81765.1">
    <molecule id="Q96J88-1"/>
</dbReference>
<dbReference type="CCDS" id="CCDS9387.1">
    <molecule id="Q96J88-2"/>
</dbReference>
<dbReference type="RefSeq" id="NP_001002264.1">
    <molecule id="Q96J88-3"/>
    <property type="nucleotide sequence ID" value="NM_001002264.4"/>
</dbReference>
<dbReference type="RefSeq" id="NP_001317472.1">
    <molecule id="Q96J88-1"/>
    <property type="nucleotide sequence ID" value="NM_001330543.2"/>
</dbReference>
<dbReference type="RefSeq" id="NP_001318157.1">
    <property type="nucleotide sequence ID" value="NM_001331228.1"/>
</dbReference>
<dbReference type="RefSeq" id="NP_150280.1">
    <molecule id="Q96J88-2"/>
    <property type="nucleotide sequence ID" value="NM_033255.5"/>
</dbReference>
<dbReference type="SMR" id="Q96J88"/>
<dbReference type="BioGRID" id="125151">
    <property type="interactions" value="25"/>
</dbReference>
<dbReference type="FunCoup" id="Q96J88">
    <property type="interactions" value="44"/>
</dbReference>
<dbReference type="IntAct" id="Q96J88">
    <property type="interactions" value="29"/>
</dbReference>
<dbReference type="MINT" id="Q96J88"/>
<dbReference type="STRING" id="9606.ENSP00000318982"/>
<dbReference type="GlyGen" id="Q96J88">
    <property type="glycosylation" value="1 site, 1 O-linked glycan (1 site)"/>
</dbReference>
<dbReference type="iPTMnet" id="Q96J88"/>
<dbReference type="PhosphoSitePlus" id="Q96J88"/>
<dbReference type="BioMuta" id="EPSTI1"/>
<dbReference type="DMDM" id="166232399"/>
<dbReference type="jPOST" id="Q96J88"/>
<dbReference type="MassIVE" id="Q96J88"/>
<dbReference type="PaxDb" id="9606-ENSP00000318982"/>
<dbReference type="PeptideAtlas" id="Q96J88"/>
<dbReference type="ProteomicsDB" id="76906">
    <molecule id="Q96J88-1"/>
</dbReference>
<dbReference type="ProteomicsDB" id="76907">
    <molecule id="Q96J88-2"/>
</dbReference>
<dbReference type="ProteomicsDB" id="76908">
    <molecule id="Q96J88-3"/>
</dbReference>
<dbReference type="Antibodypedia" id="3005">
    <property type="antibodies" value="210 antibodies from 26 providers"/>
</dbReference>
<dbReference type="DNASU" id="94240"/>
<dbReference type="Ensembl" id="ENST00000313624.12">
    <molecule id="Q96J88-2"/>
    <property type="protein sequence ID" value="ENSP00000318643.7"/>
    <property type="gene ID" value="ENSG00000133106.15"/>
</dbReference>
<dbReference type="Ensembl" id="ENST00000313640.11">
    <molecule id="Q96J88-3"/>
    <property type="protein sequence ID" value="ENSP00000318982.7"/>
    <property type="gene ID" value="ENSG00000133106.15"/>
</dbReference>
<dbReference type="Ensembl" id="ENST00000398762.7">
    <molecule id="Q96J88-1"/>
    <property type="protein sequence ID" value="ENSP00000381746.3"/>
    <property type="gene ID" value="ENSG00000133106.15"/>
</dbReference>
<dbReference type="GeneID" id="94240"/>
<dbReference type="KEGG" id="hsa:94240"/>
<dbReference type="MANE-Select" id="ENST00000313624.12">
    <molecule id="Q96J88-2"/>
    <property type="protein sequence ID" value="ENSP00000318643.7"/>
    <property type="RefSeq nucleotide sequence ID" value="NM_033255.5"/>
    <property type="RefSeq protein sequence ID" value="NP_150280.1"/>
</dbReference>
<dbReference type="UCSC" id="uc001uyw.3">
    <molecule id="Q96J88-1"/>
    <property type="organism name" value="human"/>
</dbReference>
<dbReference type="AGR" id="HGNC:16465"/>
<dbReference type="CTD" id="94240"/>
<dbReference type="DisGeNET" id="94240"/>
<dbReference type="GeneCards" id="EPSTI1"/>
<dbReference type="HGNC" id="HGNC:16465">
    <property type="gene designation" value="EPSTI1"/>
</dbReference>
<dbReference type="HPA" id="ENSG00000133106">
    <property type="expression patterns" value="Low tissue specificity"/>
</dbReference>
<dbReference type="MIM" id="607441">
    <property type="type" value="gene"/>
</dbReference>
<dbReference type="neXtProt" id="NX_Q96J88"/>
<dbReference type="OpenTargets" id="ENSG00000133106"/>
<dbReference type="PharmGKB" id="PA27840"/>
<dbReference type="VEuPathDB" id="HostDB:ENSG00000133106"/>
<dbReference type="eggNOG" id="ENOG502S1G2">
    <property type="taxonomic scope" value="Eukaryota"/>
</dbReference>
<dbReference type="GeneTree" id="ENSGT00390000013820"/>
<dbReference type="HOGENOM" id="CLU_058937_1_0_1"/>
<dbReference type="InParanoid" id="Q96J88"/>
<dbReference type="OMA" id="MNSANSW"/>
<dbReference type="OrthoDB" id="10053624at2759"/>
<dbReference type="PAN-GO" id="Q96J88">
    <property type="GO annotations" value="0 GO annotations based on evolutionary models"/>
</dbReference>
<dbReference type="PhylomeDB" id="Q96J88"/>
<dbReference type="TreeFam" id="TF335788"/>
<dbReference type="PathwayCommons" id="Q96J88"/>
<dbReference type="Reactome" id="R-HSA-9696273">
    <property type="pathway name" value="RND1 GTPase cycle"/>
</dbReference>
<dbReference type="SignaLink" id="Q96J88"/>
<dbReference type="BioGRID-ORCS" id="94240">
    <property type="hits" value="10 hits in 1141 CRISPR screens"/>
</dbReference>
<dbReference type="ChiTaRS" id="EPSTI1">
    <property type="organism name" value="human"/>
</dbReference>
<dbReference type="GenomeRNAi" id="94240"/>
<dbReference type="Pharos" id="Q96J88">
    <property type="development level" value="Tbio"/>
</dbReference>
<dbReference type="PRO" id="PR:Q96J88"/>
<dbReference type="Proteomes" id="UP000005640">
    <property type="component" value="Chromosome 13"/>
</dbReference>
<dbReference type="RNAct" id="Q96J88">
    <property type="molecule type" value="protein"/>
</dbReference>
<dbReference type="Bgee" id="ENSG00000133106">
    <property type="expression patterns" value="Expressed in oocyte and 148 other cell types or tissues"/>
</dbReference>
<dbReference type="ExpressionAtlas" id="Q96J88">
    <property type="expression patterns" value="baseline and differential"/>
</dbReference>
<dbReference type="InterPro" id="IPR026185">
    <property type="entry name" value="EPSTI1"/>
</dbReference>
<dbReference type="PANTHER" id="PTHR22529">
    <property type="entry name" value="EPITHELIAL-STROMAL INTERACTION PROTEIN 1"/>
    <property type="match status" value="1"/>
</dbReference>
<dbReference type="PANTHER" id="PTHR22529:SF1">
    <property type="entry name" value="EPITHELIAL-STROMAL INTERACTION PROTEIN 1"/>
    <property type="match status" value="1"/>
</dbReference>